<comment type="function">
    <text evidence="1">Catalyzes the reductive methylation of 2'-deoxyuridine-5'-monophosphate (dUMP) to 2'-deoxythymidine-5'-monophosphate (dTMP) while utilizing 5,10-methylenetetrahydrofolate (mTHF) as the methyl donor and reductant in the reaction, yielding dihydrofolate (DHF) as a by-product. This enzymatic reaction provides an intracellular de novo source of dTMP, an essential precursor for DNA biosynthesis.</text>
</comment>
<comment type="catalytic activity">
    <reaction evidence="1">
        <text>dUMP + (6R)-5,10-methylene-5,6,7,8-tetrahydrofolate = 7,8-dihydrofolate + dTMP</text>
        <dbReference type="Rhea" id="RHEA:12104"/>
        <dbReference type="ChEBI" id="CHEBI:15636"/>
        <dbReference type="ChEBI" id="CHEBI:57451"/>
        <dbReference type="ChEBI" id="CHEBI:63528"/>
        <dbReference type="ChEBI" id="CHEBI:246422"/>
        <dbReference type="EC" id="2.1.1.45"/>
    </reaction>
</comment>
<comment type="pathway">
    <text evidence="1">Pyrimidine metabolism; dTTP biosynthesis.</text>
</comment>
<comment type="subunit">
    <text evidence="1">Homodimer.</text>
</comment>
<comment type="subcellular location">
    <subcellularLocation>
        <location evidence="1">Cytoplasm</location>
    </subcellularLocation>
</comment>
<comment type="similarity">
    <text evidence="1">Belongs to the thymidylate synthase family. Bacterial-type ThyA subfamily.</text>
</comment>
<name>TYSY_SHESM</name>
<protein>
    <recommendedName>
        <fullName evidence="1">Thymidylate synthase</fullName>
        <shortName evidence="1">TS</shortName>
        <shortName evidence="1">TSase</shortName>
        <ecNumber evidence="1">2.1.1.45</ecNumber>
    </recommendedName>
</protein>
<organism>
    <name type="scientific">Shewanella sp. (strain MR-4)</name>
    <dbReference type="NCBI Taxonomy" id="60480"/>
    <lineage>
        <taxon>Bacteria</taxon>
        <taxon>Pseudomonadati</taxon>
        <taxon>Pseudomonadota</taxon>
        <taxon>Gammaproteobacteria</taxon>
        <taxon>Alteromonadales</taxon>
        <taxon>Shewanellaceae</taxon>
        <taxon>Shewanella</taxon>
    </lineage>
</organism>
<feature type="chain" id="PRO_1000000675" description="Thymidylate synthase">
    <location>
        <begin position="1"/>
        <end position="264"/>
    </location>
</feature>
<feature type="active site" description="Nucleophile" evidence="1">
    <location>
        <position position="146"/>
    </location>
</feature>
<feature type="binding site" description="in other chain" evidence="1">
    <location>
        <position position="21"/>
    </location>
    <ligand>
        <name>dUMP</name>
        <dbReference type="ChEBI" id="CHEBI:246422"/>
        <note>ligand shared between dimeric partners</note>
    </ligand>
</feature>
<feature type="binding site" evidence="1">
    <location>
        <position position="51"/>
    </location>
    <ligand>
        <name>(6R)-5,10-methylene-5,6,7,8-tetrahydrofolate</name>
        <dbReference type="ChEBI" id="CHEBI:15636"/>
    </ligand>
</feature>
<feature type="binding site" evidence="1">
    <location>
        <begin position="126"/>
        <end position="127"/>
    </location>
    <ligand>
        <name>dUMP</name>
        <dbReference type="ChEBI" id="CHEBI:246422"/>
        <note>ligand shared between dimeric partners</note>
    </ligand>
</feature>
<feature type="binding site" description="in other chain" evidence="1">
    <location>
        <begin position="166"/>
        <end position="169"/>
    </location>
    <ligand>
        <name>dUMP</name>
        <dbReference type="ChEBI" id="CHEBI:246422"/>
        <note>ligand shared between dimeric partners</note>
    </ligand>
</feature>
<feature type="binding site" evidence="1">
    <location>
        <position position="169"/>
    </location>
    <ligand>
        <name>(6R)-5,10-methylene-5,6,7,8-tetrahydrofolate</name>
        <dbReference type="ChEBI" id="CHEBI:15636"/>
    </ligand>
</feature>
<feature type="binding site" description="in other chain" evidence="1">
    <location>
        <position position="177"/>
    </location>
    <ligand>
        <name>dUMP</name>
        <dbReference type="ChEBI" id="CHEBI:246422"/>
        <note>ligand shared between dimeric partners</note>
    </ligand>
</feature>
<feature type="binding site" description="in other chain" evidence="1">
    <location>
        <begin position="207"/>
        <end position="209"/>
    </location>
    <ligand>
        <name>dUMP</name>
        <dbReference type="ChEBI" id="CHEBI:246422"/>
        <note>ligand shared between dimeric partners</note>
    </ligand>
</feature>
<feature type="binding site" evidence="1">
    <location>
        <position position="263"/>
    </location>
    <ligand>
        <name>(6R)-5,10-methylene-5,6,7,8-tetrahydrofolate</name>
        <dbReference type="ChEBI" id="CHEBI:15636"/>
    </ligand>
</feature>
<gene>
    <name evidence="1" type="primary">thyA</name>
    <name type="ordered locus">Shewmr4_2861</name>
</gene>
<evidence type="ECO:0000255" key="1">
    <source>
        <dbReference type="HAMAP-Rule" id="MF_00008"/>
    </source>
</evidence>
<dbReference type="EC" id="2.1.1.45" evidence="1"/>
<dbReference type="EMBL" id="CP000446">
    <property type="protein sequence ID" value="ABI39932.1"/>
    <property type="molecule type" value="Genomic_DNA"/>
</dbReference>
<dbReference type="RefSeq" id="WP_011623611.1">
    <property type="nucleotide sequence ID" value="NC_008321.1"/>
</dbReference>
<dbReference type="SMR" id="Q0HG85"/>
<dbReference type="KEGG" id="she:Shewmr4_2861"/>
<dbReference type="HOGENOM" id="CLU_021669_0_0_6"/>
<dbReference type="UniPathway" id="UPA00575"/>
<dbReference type="GO" id="GO:0005829">
    <property type="term" value="C:cytosol"/>
    <property type="evidence" value="ECO:0007669"/>
    <property type="project" value="TreeGrafter"/>
</dbReference>
<dbReference type="GO" id="GO:0004799">
    <property type="term" value="F:thymidylate synthase activity"/>
    <property type="evidence" value="ECO:0007669"/>
    <property type="project" value="UniProtKB-UniRule"/>
</dbReference>
<dbReference type="GO" id="GO:0006231">
    <property type="term" value="P:dTMP biosynthetic process"/>
    <property type="evidence" value="ECO:0007669"/>
    <property type="project" value="UniProtKB-UniRule"/>
</dbReference>
<dbReference type="GO" id="GO:0006235">
    <property type="term" value="P:dTTP biosynthetic process"/>
    <property type="evidence" value="ECO:0007669"/>
    <property type="project" value="UniProtKB-UniRule"/>
</dbReference>
<dbReference type="GO" id="GO:0032259">
    <property type="term" value="P:methylation"/>
    <property type="evidence" value="ECO:0007669"/>
    <property type="project" value="UniProtKB-KW"/>
</dbReference>
<dbReference type="CDD" id="cd00351">
    <property type="entry name" value="TS_Pyrimidine_HMase"/>
    <property type="match status" value="1"/>
</dbReference>
<dbReference type="FunFam" id="3.30.572.10:FF:000001">
    <property type="entry name" value="Thymidylate synthase"/>
    <property type="match status" value="1"/>
</dbReference>
<dbReference type="Gene3D" id="3.30.572.10">
    <property type="entry name" value="Thymidylate synthase/dCMP hydroxymethylase domain"/>
    <property type="match status" value="1"/>
</dbReference>
<dbReference type="HAMAP" id="MF_00008">
    <property type="entry name" value="Thymidy_synth_bact"/>
    <property type="match status" value="1"/>
</dbReference>
<dbReference type="InterPro" id="IPR045097">
    <property type="entry name" value="Thymidate_synth/dCMP_Mease"/>
</dbReference>
<dbReference type="InterPro" id="IPR023451">
    <property type="entry name" value="Thymidate_synth/dCMP_Mease_dom"/>
</dbReference>
<dbReference type="InterPro" id="IPR036926">
    <property type="entry name" value="Thymidate_synth/dCMP_Mease_sf"/>
</dbReference>
<dbReference type="InterPro" id="IPR000398">
    <property type="entry name" value="Thymidylate_synthase"/>
</dbReference>
<dbReference type="InterPro" id="IPR020940">
    <property type="entry name" value="Thymidylate_synthase_AS"/>
</dbReference>
<dbReference type="NCBIfam" id="NF002497">
    <property type="entry name" value="PRK01827.1-3"/>
    <property type="match status" value="1"/>
</dbReference>
<dbReference type="NCBIfam" id="NF002499">
    <property type="entry name" value="PRK01827.1-5"/>
    <property type="match status" value="1"/>
</dbReference>
<dbReference type="NCBIfam" id="TIGR03284">
    <property type="entry name" value="thym_sym"/>
    <property type="match status" value="2"/>
</dbReference>
<dbReference type="PANTHER" id="PTHR11548:SF9">
    <property type="entry name" value="THYMIDYLATE SYNTHASE"/>
    <property type="match status" value="1"/>
</dbReference>
<dbReference type="PANTHER" id="PTHR11548">
    <property type="entry name" value="THYMIDYLATE SYNTHASE 1"/>
    <property type="match status" value="1"/>
</dbReference>
<dbReference type="Pfam" id="PF00303">
    <property type="entry name" value="Thymidylat_synt"/>
    <property type="match status" value="1"/>
</dbReference>
<dbReference type="PRINTS" id="PR00108">
    <property type="entry name" value="THYMDSNTHASE"/>
</dbReference>
<dbReference type="SUPFAM" id="SSF55831">
    <property type="entry name" value="Thymidylate synthase/dCMP hydroxymethylase"/>
    <property type="match status" value="1"/>
</dbReference>
<dbReference type="PROSITE" id="PS00091">
    <property type="entry name" value="THYMIDYLATE_SYNTHASE"/>
    <property type="match status" value="1"/>
</dbReference>
<reference key="1">
    <citation type="submission" date="2006-08" db="EMBL/GenBank/DDBJ databases">
        <title>Complete sequence of Shewanella sp. MR-4.</title>
        <authorList>
            <consortium name="US DOE Joint Genome Institute"/>
            <person name="Copeland A."/>
            <person name="Lucas S."/>
            <person name="Lapidus A."/>
            <person name="Barry K."/>
            <person name="Detter J.C."/>
            <person name="Glavina del Rio T."/>
            <person name="Hammon N."/>
            <person name="Israni S."/>
            <person name="Dalin E."/>
            <person name="Tice H."/>
            <person name="Pitluck S."/>
            <person name="Kiss H."/>
            <person name="Brettin T."/>
            <person name="Bruce D."/>
            <person name="Han C."/>
            <person name="Tapia R."/>
            <person name="Gilna P."/>
            <person name="Schmutz J."/>
            <person name="Larimer F."/>
            <person name="Land M."/>
            <person name="Hauser L."/>
            <person name="Kyrpides N."/>
            <person name="Mikhailova N."/>
            <person name="Nealson K."/>
            <person name="Konstantinidis K."/>
            <person name="Klappenbach J."/>
            <person name="Tiedje J."/>
            <person name="Richardson P."/>
        </authorList>
    </citation>
    <scope>NUCLEOTIDE SEQUENCE [LARGE SCALE GENOMIC DNA]</scope>
    <source>
        <strain>MR-4</strain>
    </source>
</reference>
<proteinExistence type="inferred from homology"/>
<accession>Q0HG85</accession>
<sequence>MQQYLDLMKHILAEGVDKSDRTGTGTRSVFGYQMRFDLSKGFPLVTTKKCHMRSIIHELLWFLKGDTNIAYLRDNKVSIWDEWADENGDLGPVYGAQWRSWPTQSGDAIDQIAQVIAQIKSQPDSRRLIVSAWNVGELDKMALAPCHAFFQFYVADGKLSCQLYQRSCDVFLGLPFNIASYALLTMMVAQQCDLALGDFVWTGGDTHLYSNHMEQTALQLSREPRPLPTMTILRKPASIFDYQFEDFELTNYDPHPHIKAPVAV</sequence>
<keyword id="KW-0963">Cytoplasm</keyword>
<keyword id="KW-0489">Methyltransferase</keyword>
<keyword id="KW-0545">Nucleotide biosynthesis</keyword>
<keyword id="KW-0808">Transferase</keyword>